<name>NQRA_TERTT</name>
<feature type="chain" id="PRO_1000206061" description="Na(+)-translocating NADH-quinone reductase subunit A">
    <location>
        <begin position="1"/>
        <end position="445"/>
    </location>
</feature>
<protein>
    <recommendedName>
        <fullName evidence="1">Na(+)-translocating NADH-quinone reductase subunit A</fullName>
        <shortName evidence="1">Na(+)-NQR subunit A</shortName>
        <shortName evidence="1">Na(+)-translocating NQR subunit A</shortName>
        <ecNumber evidence="1">7.2.1.1</ecNumber>
    </recommendedName>
    <alternativeName>
        <fullName evidence="1">NQR complex subunit A</fullName>
    </alternativeName>
    <alternativeName>
        <fullName evidence="1">NQR-1 subunit A</fullName>
    </alternativeName>
</protein>
<organism>
    <name type="scientific">Teredinibacter turnerae (strain ATCC 39867 / T7901)</name>
    <dbReference type="NCBI Taxonomy" id="377629"/>
    <lineage>
        <taxon>Bacteria</taxon>
        <taxon>Pseudomonadati</taxon>
        <taxon>Pseudomonadota</taxon>
        <taxon>Gammaproteobacteria</taxon>
        <taxon>Cellvibrionales</taxon>
        <taxon>Cellvibrionaceae</taxon>
        <taxon>Teredinibacter</taxon>
    </lineage>
</organism>
<accession>C5BII1</accession>
<evidence type="ECO:0000255" key="1">
    <source>
        <dbReference type="HAMAP-Rule" id="MF_00425"/>
    </source>
</evidence>
<comment type="function">
    <text evidence="1">NQR complex catalyzes the reduction of ubiquinone-1 to ubiquinol by two successive reactions, coupled with the transport of Na(+) ions from the cytoplasm to the periplasm. NqrA to NqrE are probably involved in the second step, the conversion of ubisemiquinone to ubiquinol.</text>
</comment>
<comment type="catalytic activity">
    <reaction evidence="1">
        <text>a ubiquinone + n Na(+)(in) + NADH + H(+) = a ubiquinol + n Na(+)(out) + NAD(+)</text>
        <dbReference type="Rhea" id="RHEA:47748"/>
        <dbReference type="Rhea" id="RHEA-COMP:9565"/>
        <dbReference type="Rhea" id="RHEA-COMP:9566"/>
        <dbReference type="ChEBI" id="CHEBI:15378"/>
        <dbReference type="ChEBI" id="CHEBI:16389"/>
        <dbReference type="ChEBI" id="CHEBI:17976"/>
        <dbReference type="ChEBI" id="CHEBI:29101"/>
        <dbReference type="ChEBI" id="CHEBI:57540"/>
        <dbReference type="ChEBI" id="CHEBI:57945"/>
        <dbReference type="EC" id="7.2.1.1"/>
    </reaction>
</comment>
<comment type="subunit">
    <text evidence="1">Composed of six subunits; NqrA, NqrB, NqrC, NqrD, NqrE and NqrF.</text>
</comment>
<comment type="similarity">
    <text evidence="1">Belongs to the NqrA family.</text>
</comment>
<keyword id="KW-0406">Ion transport</keyword>
<keyword id="KW-0520">NAD</keyword>
<keyword id="KW-1185">Reference proteome</keyword>
<keyword id="KW-0915">Sodium</keyword>
<keyword id="KW-0739">Sodium transport</keyword>
<keyword id="KW-1278">Translocase</keyword>
<keyword id="KW-0813">Transport</keyword>
<keyword id="KW-0830">Ubiquinone</keyword>
<sequence>MIKIRRGLDLPITGEPRQSIEDGPSIRSVAVIGFDYHGMKPTMAVQEGDKVKKGQLLFTDKKTEGVRYTAPASGTVSAVNRGYQRVLQSVVIDVEGGEAETFAKYSESDLANLARQQVVDNLNDAGLWAAIRTRPFSKAPALDAVPAAIFVSAMDTNPLAADPTLIINERPQSFINGLVVLSKLTEGKLFVCHAEGASVPQSSVATYETFGGVHPAGNVGTHMHFLAPVSLERQSWSVGYQDVMAIGDLFTSGELASERVVALGGPQMENPRLVRTLVGASLEELTAGQLKAGENRMISGSVFGGRNAYGPTAFLGRYHNQVSVLAEGRERPFMHFVVPGSKRFSALPIYISTLMKGKKYDFTTSCNGSERAMVPTGSYEQVMPLDILATQLLRSLIVGDTEMAQKLGCLELDEEDLALCSFVCSGKYEYGPILRDNLTRIEKEG</sequence>
<gene>
    <name evidence="1" type="primary">nqrA</name>
    <name type="ordered locus">TERTU_1949</name>
</gene>
<proteinExistence type="inferred from homology"/>
<reference key="1">
    <citation type="journal article" date="2009" name="PLoS ONE">
        <title>The complete genome of Teredinibacter turnerae T7901: an intracellular endosymbiont of marine wood-boring bivalves (shipworms).</title>
        <authorList>
            <person name="Yang J.C."/>
            <person name="Madupu R."/>
            <person name="Durkin A.S."/>
            <person name="Ekborg N.A."/>
            <person name="Pedamallu C.S."/>
            <person name="Hostetler J.B."/>
            <person name="Radune D."/>
            <person name="Toms B.S."/>
            <person name="Henrissat B."/>
            <person name="Coutinho P.M."/>
            <person name="Schwarz S."/>
            <person name="Field L."/>
            <person name="Trindade-Silva A.E."/>
            <person name="Soares C.A.G."/>
            <person name="Elshahawi S."/>
            <person name="Hanora A."/>
            <person name="Schmidt E.W."/>
            <person name="Haygood M.G."/>
            <person name="Posfai J."/>
            <person name="Benner J."/>
            <person name="Madinger C."/>
            <person name="Nove J."/>
            <person name="Anton B."/>
            <person name="Chaudhary K."/>
            <person name="Foster J."/>
            <person name="Holman A."/>
            <person name="Kumar S."/>
            <person name="Lessard P.A."/>
            <person name="Luyten Y.A."/>
            <person name="Slatko B."/>
            <person name="Wood N."/>
            <person name="Wu B."/>
            <person name="Teplitski M."/>
            <person name="Mougous J.D."/>
            <person name="Ward N."/>
            <person name="Eisen J.A."/>
            <person name="Badger J.H."/>
            <person name="Distel D.L."/>
        </authorList>
    </citation>
    <scope>NUCLEOTIDE SEQUENCE [LARGE SCALE GENOMIC DNA]</scope>
    <source>
        <strain>ATCC 39867 / T7901</strain>
    </source>
</reference>
<dbReference type="EC" id="7.2.1.1" evidence="1"/>
<dbReference type="EMBL" id="CP001614">
    <property type="protein sequence ID" value="ACR11302.1"/>
    <property type="molecule type" value="Genomic_DNA"/>
</dbReference>
<dbReference type="RefSeq" id="WP_015817414.1">
    <property type="nucleotide sequence ID" value="NC_012997.1"/>
</dbReference>
<dbReference type="SMR" id="C5BII1"/>
<dbReference type="STRING" id="377629.TERTU_1949"/>
<dbReference type="KEGG" id="ttu:TERTU_1949"/>
<dbReference type="eggNOG" id="COG1726">
    <property type="taxonomic scope" value="Bacteria"/>
</dbReference>
<dbReference type="HOGENOM" id="CLU_046656_0_0_6"/>
<dbReference type="OrthoDB" id="9774536at2"/>
<dbReference type="Proteomes" id="UP000009080">
    <property type="component" value="Chromosome"/>
</dbReference>
<dbReference type="GO" id="GO:0016655">
    <property type="term" value="F:oxidoreductase activity, acting on NAD(P)H, quinone or similar compound as acceptor"/>
    <property type="evidence" value="ECO:0007669"/>
    <property type="project" value="UniProtKB-UniRule"/>
</dbReference>
<dbReference type="GO" id="GO:0006814">
    <property type="term" value="P:sodium ion transport"/>
    <property type="evidence" value="ECO:0007669"/>
    <property type="project" value="UniProtKB-UniRule"/>
</dbReference>
<dbReference type="Gene3D" id="2.40.50.100">
    <property type="match status" value="1"/>
</dbReference>
<dbReference type="HAMAP" id="MF_00425">
    <property type="entry name" value="NqrA"/>
    <property type="match status" value="1"/>
</dbReference>
<dbReference type="InterPro" id="IPR008703">
    <property type="entry name" value="NqrA"/>
</dbReference>
<dbReference type="InterPro" id="IPR056148">
    <property type="entry name" value="NQRA_2nd"/>
</dbReference>
<dbReference type="InterPro" id="IPR022615">
    <property type="entry name" value="NqrA_C_domain"/>
</dbReference>
<dbReference type="InterPro" id="IPR056147">
    <property type="entry name" value="NQRA_N"/>
</dbReference>
<dbReference type="NCBIfam" id="TIGR01936">
    <property type="entry name" value="nqrA"/>
    <property type="match status" value="1"/>
</dbReference>
<dbReference type="NCBIfam" id="NF003759">
    <property type="entry name" value="PRK05352.1-2"/>
    <property type="match status" value="1"/>
</dbReference>
<dbReference type="PANTHER" id="PTHR37839">
    <property type="entry name" value="NA(+)-TRANSLOCATING NADH-QUINONE REDUCTASE SUBUNIT A"/>
    <property type="match status" value="1"/>
</dbReference>
<dbReference type="PANTHER" id="PTHR37839:SF1">
    <property type="entry name" value="NA(+)-TRANSLOCATING NADH-QUINONE REDUCTASE SUBUNIT A"/>
    <property type="match status" value="1"/>
</dbReference>
<dbReference type="Pfam" id="PF24836">
    <property type="entry name" value="NQRA_2nd"/>
    <property type="match status" value="1"/>
</dbReference>
<dbReference type="Pfam" id="PF05896">
    <property type="entry name" value="NQRA_N"/>
    <property type="match status" value="1"/>
</dbReference>
<dbReference type="Pfam" id="PF11973">
    <property type="entry name" value="NQRA_SLBB"/>
    <property type="match status" value="1"/>
</dbReference>